<feature type="chain" id="PRO_0000146217" description="Small ribosomal subunit protein uS12">
    <location>
        <begin position="1"/>
        <end position="124"/>
    </location>
</feature>
<feature type="region of interest" description="Disordered" evidence="3">
    <location>
        <begin position="1"/>
        <end position="24"/>
    </location>
</feature>
<feature type="modified residue" description="3-methylthioaspartic acid" evidence="1">
    <location>
        <position position="89"/>
    </location>
</feature>
<proteinExistence type="inferred from homology"/>
<organism>
    <name type="scientific">Desulfotalea psychrophila (strain LSv54 / DSM 12343)</name>
    <dbReference type="NCBI Taxonomy" id="177439"/>
    <lineage>
        <taxon>Bacteria</taxon>
        <taxon>Pseudomonadati</taxon>
        <taxon>Thermodesulfobacteriota</taxon>
        <taxon>Desulfobulbia</taxon>
        <taxon>Desulfobulbales</taxon>
        <taxon>Desulfocapsaceae</taxon>
        <taxon>Desulfotalea</taxon>
    </lineage>
</organism>
<sequence length="124" mass="13742">MPTINQLVRQGRKKSVKKTNTPALKGCPQKRGVCVRVYTTTPKKPNSALRKVARVRLTNGIEVTSYIPGIGHNLQEHSVVMIRGGRVKDLPGVRYHVIRGTLDTLGVSDRRQGRSKYGAKKPSK</sequence>
<protein>
    <recommendedName>
        <fullName evidence="2">Small ribosomal subunit protein uS12</fullName>
    </recommendedName>
    <alternativeName>
        <fullName evidence="4">30S ribosomal protein S12</fullName>
    </alternativeName>
</protein>
<dbReference type="EMBL" id="CR522870">
    <property type="protein sequence ID" value="CAG35848.1"/>
    <property type="molecule type" value="Genomic_DNA"/>
</dbReference>
<dbReference type="RefSeq" id="WP_011188362.1">
    <property type="nucleotide sequence ID" value="NC_006138.1"/>
</dbReference>
<dbReference type="SMR" id="Q6AP76"/>
<dbReference type="STRING" id="177439.DP1119"/>
<dbReference type="KEGG" id="dps:DP1119"/>
<dbReference type="eggNOG" id="COG0048">
    <property type="taxonomic scope" value="Bacteria"/>
</dbReference>
<dbReference type="HOGENOM" id="CLU_104295_1_2_7"/>
<dbReference type="OrthoDB" id="9802366at2"/>
<dbReference type="Proteomes" id="UP000000602">
    <property type="component" value="Chromosome"/>
</dbReference>
<dbReference type="GO" id="GO:0015935">
    <property type="term" value="C:small ribosomal subunit"/>
    <property type="evidence" value="ECO:0007669"/>
    <property type="project" value="InterPro"/>
</dbReference>
<dbReference type="GO" id="GO:0019843">
    <property type="term" value="F:rRNA binding"/>
    <property type="evidence" value="ECO:0007669"/>
    <property type="project" value="UniProtKB-UniRule"/>
</dbReference>
<dbReference type="GO" id="GO:0003735">
    <property type="term" value="F:structural constituent of ribosome"/>
    <property type="evidence" value="ECO:0007669"/>
    <property type="project" value="InterPro"/>
</dbReference>
<dbReference type="GO" id="GO:0000049">
    <property type="term" value="F:tRNA binding"/>
    <property type="evidence" value="ECO:0007669"/>
    <property type="project" value="UniProtKB-UniRule"/>
</dbReference>
<dbReference type="GO" id="GO:0006412">
    <property type="term" value="P:translation"/>
    <property type="evidence" value="ECO:0007669"/>
    <property type="project" value="UniProtKB-UniRule"/>
</dbReference>
<dbReference type="CDD" id="cd03368">
    <property type="entry name" value="Ribosomal_S12"/>
    <property type="match status" value="1"/>
</dbReference>
<dbReference type="FunFam" id="2.40.50.140:FF:000001">
    <property type="entry name" value="30S ribosomal protein S12"/>
    <property type="match status" value="1"/>
</dbReference>
<dbReference type="Gene3D" id="2.40.50.140">
    <property type="entry name" value="Nucleic acid-binding proteins"/>
    <property type="match status" value="1"/>
</dbReference>
<dbReference type="HAMAP" id="MF_00403_B">
    <property type="entry name" value="Ribosomal_uS12_B"/>
    <property type="match status" value="1"/>
</dbReference>
<dbReference type="InterPro" id="IPR012340">
    <property type="entry name" value="NA-bd_OB-fold"/>
</dbReference>
<dbReference type="InterPro" id="IPR006032">
    <property type="entry name" value="Ribosomal_uS12"/>
</dbReference>
<dbReference type="InterPro" id="IPR005679">
    <property type="entry name" value="Ribosomal_uS12_bac"/>
</dbReference>
<dbReference type="NCBIfam" id="TIGR00981">
    <property type="entry name" value="rpsL_bact"/>
    <property type="match status" value="1"/>
</dbReference>
<dbReference type="PANTHER" id="PTHR11652">
    <property type="entry name" value="30S RIBOSOMAL PROTEIN S12 FAMILY MEMBER"/>
    <property type="match status" value="1"/>
</dbReference>
<dbReference type="Pfam" id="PF00164">
    <property type="entry name" value="Ribosom_S12_S23"/>
    <property type="match status" value="1"/>
</dbReference>
<dbReference type="PIRSF" id="PIRSF002133">
    <property type="entry name" value="Ribosomal_S12/S23"/>
    <property type="match status" value="1"/>
</dbReference>
<dbReference type="PRINTS" id="PR01034">
    <property type="entry name" value="RIBOSOMALS12"/>
</dbReference>
<dbReference type="SUPFAM" id="SSF50249">
    <property type="entry name" value="Nucleic acid-binding proteins"/>
    <property type="match status" value="1"/>
</dbReference>
<dbReference type="PROSITE" id="PS00055">
    <property type="entry name" value="RIBOSOMAL_S12"/>
    <property type="match status" value="1"/>
</dbReference>
<keyword id="KW-0488">Methylation</keyword>
<keyword id="KW-1185">Reference proteome</keyword>
<keyword id="KW-0687">Ribonucleoprotein</keyword>
<keyword id="KW-0689">Ribosomal protein</keyword>
<keyword id="KW-0694">RNA-binding</keyword>
<keyword id="KW-0699">rRNA-binding</keyword>
<keyword id="KW-0820">tRNA-binding</keyword>
<accession>Q6AP76</accession>
<name>RS12_DESPS</name>
<reference key="1">
    <citation type="journal article" date="2004" name="Environ. Microbiol.">
        <title>The genome of Desulfotalea psychrophila, a sulfate-reducing bacterium from permanently cold Arctic sediments.</title>
        <authorList>
            <person name="Rabus R."/>
            <person name="Ruepp A."/>
            <person name="Frickey T."/>
            <person name="Rattei T."/>
            <person name="Fartmann B."/>
            <person name="Stark M."/>
            <person name="Bauer M."/>
            <person name="Zibat A."/>
            <person name="Lombardot T."/>
            <person name="Becker I."/>
            <person name="Amann J."/>
            <person name="Gellner K."/>
            <person name="Teeling H."/>
            <person name="Leuschner W.D."/>
            <person name="Gloeckner F.-O."/>
            <person name="Lupas A.N."/>
            <person name="Amann R."/>
            <person name="Klenk H.-P."/>
        </authorList>
    </citation>
    <scope>NUCLEOTIDE SEQUENCE [LARGE SCALE GENOMIC DNA]</scope>
    <source>
        <strain>DSM 12343 / LSv54</strain>
    </source>
</reference>
<evidence type="ECO:0000250" key="1"/>
<evidence type="ECO:0000255" key="2">
    <source>
        <dbReference type="HAMAP-Rule" id="MF_00403"/>
    </source>
</evidence>
<evidence type="ECO:0000256" key="3">
    <source>
        <dbReference type="SAM" id="MobiDB-lite"/>
    </source>
</evidence>
<evidence type="ECO:0000305" key="4"/>
<gene>
    <name evidence="2" type="primary">rpsL</name>
    <name type="ordered locus">DP1119</name>
</gene>
<comment type="function">
    <text evidence="2">With S4 and S5 plays an important role in translational accuracy.</text>
</comment>
<comment type="function">
    <text evidence="2">Interacts with and stabilizes bases of the 16S rRNA that are involved in tRNA selection in the A site and with the mRNA backbone. Located at the interface of the 30S and 50S subunits, it traverses the body of the 30S subunit contacting proteins on the other side and probably holding the rRNA structure together. The combined cluster of proteins S8, S12 and S17 appears to hold together the shoulder and platform of the 30S subunit.</text>
</comment>
<comment type="subunit">
    <text evidence="2">Part of the 30S ribosomal subunit. Contacts proteins S8 and S17. May interact with IF1 in the 30S initiation complex.</text>
</comment>
<comment type="similarity">
    <text evidence="2">Belongs to the universal ribosomal protein uS12 family.</text>
</comment>